<evidence type="ECO:0000250" key="1">
    <source>
        <dbReference type="UniProtKB" id="P0C5I2"/>
    </source>
</evidence>
<evidence type="ECO:0000250" key="2">
    <source>
        <dbReference type="UniProtKB" id="Q9Y5P6"/>
    </source>
</evidence>
<evidence type="ECO:0000305" key="3"/>
<name>GMPPB_DICDI</name>
<sequence length="359" mass="39354">MKALILVGGFGTRLRPLTLSKPKPIVEFANKAMILHQIEALCKIGVNEVVLAVNYRPQLMSQYLEPYEKKLGIKISYSHETVPLGTAGPLALARDLLNDGEPFFVLNSDIICDFPFADLLAFHKSHGGEGTIMVTKVEEPSKYGVVVYKEENGQILKFVEKPQVYVGNKINAGVYIFNPTILDRIQPKPTSIEKEIFPAMAADSQLYCMQLEGFWMDVGQPKDFLSGMGLYLNSLKSKQPELLATGNGIIGPVLIDPSSVIEPGCLIGPNVTIGPNCVIQEGTRLVNTTVLEGTTIGKNSWIKSTIIGWNSSIGKWVRMENTSVLGEDVHVSDELYINGGKILPHKSITSSIPEPEIIM</sequence>
<accession>Q54K39</accession>
<feature type="chain" id="PRO_0000328173" description="Mannose-1-phosphate guanylyltransferase catalytic subunit beta">
    <location>
        <begin position="1"/>
        <end position="359"/>
    </location>
</feature>
<feature type="region of interest" description="Substrate-binding domain" evidence="2">
    <location>
        <begin position="2"/>
        <end position="221"/>
    </location>
</feature>
<feature type="region of interest" description="Hexapeptide repeat domain" evidence="2">
    <location>
        <begin position="244"/>
        <end position="359"/>
    </location>
</feature>
<feature type="active site" evidence="2">
    <location>
        <position position="161"/>
    </location>
</feature>
<feature type="binding site" evidence="2">
    <location>
        <position position="109"/>
    </location>
    <ligand>
        <name>GDP-alpha-D-mannose</name>
        <dbReference type="ChEBI" id="CHEBI:57527"/>
    </ligand>
</feature>
<feature type="binding site" evidence="2">
    <location>
        <position position="109"/>
    </location>
    <ligand>
        <name>Mg(2+)</name>
        <dbReference type="ChEBI" id="CHEBI:18420"/>
    </ligand>
</feature>
<feature type="binding site" evidence="2">
    <location>
        <position position="217"/>
    </location>
    <ligand>
        <name>GDP-alpha-D-mannose</name>
        <dbReference type="ChEBI" id="CHEBI:57527"/>
    </ligand>
</feature>
<feature type="binding site" evidence="2">
    <location>
        <position position="217"/>
    </location>
    <ligand>
        <name>Mg(2+)</name>
        <dbReference type="ChEBI" id="CHEBI:18420"/>
    </ligand>
</feature>
<organism>
    <name type="scientific">Dictyostelium discoideum</name>
    <name type="common">Social amoeba</name>
    <dbReference type="NCBI Taxonomy" id="44689"/>
    <lineage>
        <taxon>Eukaryota</taxon>
        <taxon>Amoebozoa</taxon>
        <taxon>Evosea</taxon>
        <taxon>Eumycetozoa</taxon>
        <taxon>Dictyostelia</taxon>
        <taxon>Dictyosteliales</taxon>
        <taxon>Dictyosteliaceae</taxon>
        <taxon>Dictyostelium</taxon>
    </lineage>
</organism>
<comment type="function">
    <text evidence="1 2">Catalytic subunit of the GMPPA-GMPPB mannose-1-phosphate guanylyltransferase complex (By similarity). Catalyzes the formation of GDP-mannose, an essential precursor of glycan moieties of glycoproteins and glycolipids (By similarity). Can catalyze the reverse reaction in vitro (By similarity). Together with GMPPA regulates GDP-alpha-D-mannose levels (By similarity).</text>
</comment>
<comment type="catalytic activity">
    <reaction evidence="1">
        <text>alpha-D-mannose 1-phosphate + GTP + H(+) = GDP-alpha-D-mannose + diphosphate</text>
        <dbReference type="Rhea" id="RHEA:15229"/>
        <dbReference type="ChEBI" id="CHEBI:15378"/>
        <dbReference type="ChEBI" id="CHEBI:33019"/>
        <dbReference type="ChEBI" id="CHEBI:37565"/>
        <dbReference type="ChEBI" id="CHEBI:57527"/>
        <dbReference type="ChEBI" id="CHEBI:58409"/>
        <dbReference type="EC" id="2.7.7.13"/>
    </reaction>
    <physiologicalReaction direction="left-to-right" evidence="2">
        <dbReference type="Rhea" id="RHEA:15230"/>
    </physiologicalReaction>
    <physiologicalReaction direction="right-to-left" evidence="2">
        <dbReference type="Rhea" id="RHEA:15231"/>
    </physiologicalReaction>
</comment>
<comment type="cofactor">
    <cofactor evidence="2">
        <name>Mg(2+)</name>
        <dbReference type="ChEBI" id="CHEBI:18420"/>
    </cofactor>
    <text evidence="2">Coordinates binding with substrate and required for enzymatic activity.</text>
</comment>
<comment type="activity regulation">
    <text evidence="2">Enzyme activity is reduced by incorporation into the GMPPA-GMPPB mannose-1-phosphate guanylyltransferase complex. Allosterically inhibited, when part of the GMPPA-GMPPB complex, by GDP-alpha-D-mannose binding to GMPPA.</text>
</comment>
<comment type="pathway">
    <text evidence="1">Nucleotide-sugar biosynthesis; GDP-alpha-D-mannose biosynthesis; GDP-alpha-D-mannose from alpha-D-mannose 1-phosphate (GTP route): step 1/1.</text>
</comment>
<comment type="subunit">
    <text evidence="2">Component of the GMPPA-GMPPB mannose-1-phosphate guanylyltransferase complex composed of 4 GMPPA subunits and 8 gmppB subunits; the complex is organized into three layers, a central layer made up of 2 gmppA dimers sandwiched between two layers each made up of 2 gmppB dimers. gmppB catalytic activity is reduced when part of the complex and binding of GDP-alpha-D-Mannose by gmppA induces allosteric feedback inhibition of gmppB.</text>
</comment>
<comment type="domain">
    <text evidence="2">The N-terminal substrate-binding domain adopts a Rossman-like fold and has a binding pocket for GTP or GDP-alpha-D-mannose (By similarity). Substrate binding is coordinated by an Mg(2+) ion (By similarity).</text>
</comment>
<comment type="domain">
    <text evidence="2">The C-terminal domain consists of a series of tandem hexapeptide repeats that adopt a beta-helix conformation (By similarity). The beta-helix forms several protein interaction surfaces involved in assembly of the GMPPA-GMPPB mannose-1-phosphate guanylyltransferase complex (By similarity).</text>
</comment>
<comment type="similarity">
    <text evidence="3">Belongs to the transferase hexapeptide repeat family.</text>
</comment>
<keyword id="KW-0342">GTP-binding</keyword>
<keyword id="KW-0460">Magnesium</keyword>
<keyword id="KW-0479">Metal-binding</keyword>
<keyword id="KW-0547">Nucleotide-binding</keyword>
<keyword id="KW-0548">Nucleotidyltransferase</keyword>
<keyword id="KW-1185">Reference proteome</keyword>
<keyword id="KW-0808">Transferase</keyword>
<reference key="1">
    <citation type="journal article" date="2005" name="Nature">
        <title>The genome of the social amoeba Dictyostelium discoideum.</title>
        <authorList>
            <person name="Eichinger L."/>
            <person name="Pachebat J.A."/>
            <person name="Gloeckner G."/>
            <person name="Rajandream M.A."/>
            <person name="Sucgang R."/>
            <person name="Berriman M."/>
            <person name="Song J."/>
            <person name="Olsen R."/>
            <person name="Szafranski K."/>
            <person name="Xu Q."/>
            <person name="Tunggal B."/>
            <person name="Kummerfeld S."/>
            <person name="Madera M."/>
            <person name="Konfortov B.A."/>
            <person name="Rivero F."/>
            <person name="Bankier A.T."/>
            <person name="Lehmann R."/>
            <person name="Hamlin N."/>
            <person name="Davies R."/>
            <person name="Gaudet P."/>
            <person name="Fey P."/>
            <person name="Pilcher K."/>
            <person name="Chen G."/>
            <person name="Saunders D."/>
            <person name="Sodergren E.J."/>
            <person name="Davis P."/>
            <person name="Kerhornou A."/>
            <person name="Nie X."/>
            <person name="Hall N."/>
            <person name="Anjard C."/>
            <person name="Hemphill L."/>
            <person name="Bason N."/>
            <person name="Farbrother P."/>
            <person name="Desany B."/>
            <person name="Just E."/>
            <person name="Morio T."/>
            <person name="Rost R."/>
            <person name="Churcher C.M."/>
            <person name="Cooper J."/>
            <person name="Haydock S."/>
            <person name="van Driessche N."/>
            <person name="Cronin A."/>
            <person name="Goodhead I."/>
            <person name="Muzny D.M."/>
            <person name="Mourier T."/>
            <person name="Pain A."/>
            <person name="Lu M."/>
            <person name="Harper D."/>
            <person name="Lindsay R."/>
            <person name="Hauser H."/>
            <person name="James K.D."/>
            <person name="Quiles M."/>
            <person name="Madan Babu M."/>
            <person name="Saito T."/>
            <person name="Buchrieser C."/>
            <person name="Wardroper A."/>
            <person name="Felder M."/>
            <person name="Thangavelu M."/>
            <person name="Johnson D."/>
            <person name="Knights A."/>
            <person name="Loulseged H."/>
            <person name="Mungall K.L."/>
            <person name="Oliver K."/>
            <person name="Price C."/>
            <person name="Quail M.A."/>
            <person name="Urushihara H."/>
            <person name="Hernandez J."/>
            <person name="Rabbinowitsch E."/>
            <person name="Steffen D."/>
            <person name="Sanders M."/>
            <person name="Ma J."/>
            <person name="Kohara Y."/>
            <person name="Sharp S."/>
            <person name="Simmonds M.N."/>
            <person name="Spiegler S."/>
            <person name="Tivey A."/>
            <person name="Sugano S."/>
            <person name="White B."/>
            <person name="Walker D."/>
            <person name="Woodward J.R."/>
            <person name="Winckler T."/>
            <person name="Tanaka Y."/>
            <person name="Shaulsky G."/>
            <person name="Schleicher M."/>
            <person name="Weinstock G.M."/>
            <person name="Rosenthal A."/>
            <person name="Cox E.C."/>
            <person name="Chisholm R.L."/>
            <person name="Gibbs R.A."/>
            <person name="Loomis W.F."/>
            <person name="Platzer M."/>
            <person name="Kay R.R."/>
            <person name="Williams J.G."/>
            <person name="Dear P.H."/>
            <person name="Noegel A.A."/>
            <person name="Barrell B.G."/>
            <person name="Kuspa A."/>
        </authorList>
    </citation>
    <scope>NUCLEOTIDE SEQUENCE [LARGE SCALE GENOMIC DNA]</scope>
    <source>
        <strain>AX4</strain>
    </source>
</reference>
<dbReference type="EC" id="2.7.7.13" evidence="1"/>
<dbReference type="EMBL" id="AAFI02000103">
    <property type="protein sequence ID" value="EAL63618.1"/>
    <property type="molecule type" value="Genomic_DNA"/>
</dbReference>
<dbReference type="RefSeq" id="XP_637125.1">
    <property type="nucleotide sequence ID" value="XM_632033.1"/>
</dbReference>
<dbReference type="SMR" id="Q54K39"/>
<dbReference type="FunCoup" id="Q54K39">
    <property type="interactions" value="237"/>
</dbReference>
<dbReference type="STRING" id="44689.Q54K39"/>
<dbReference type="PaxDb" id="44689-DDB0231665"/>
<dbReference type="EnsemblProtists" id="EAL63618">
    <property type="protein sequence ID" value="EAL63618"/>
    <property type="gene ID" value="DDB_G0287619"/>
</dbReference>
<dbReference type="GeneID" id="8626220"/>
<dbReference type="KEGG" id="ddi:DDB_G0287619"/>
<dbReference type="dictyBase" id="DDB_G0287619">
    <property type="gene designation" value="gmppB"/>
</dbReference>
<dbReference type="VEuPathDB" id="AmoebaDB:DDB_G0287619"/>
<dbReference type="eggNOG" id="KOG1322">
    <property type="taxonomic scope" value="Eukaryota"/>
</dbReference>
<dbReference type="HOGENOM" id="CLU_029499_0_0_1"/>
<dbReference type="InParanoid" id="Q54K39"/>
<dbReference type="OMA" id="GPNCWIC"/>
<dbReference type="PhylomeDB" id="Q54K39"/>
<dbReference type="Reactome" id="R-DDI-446205">
    <property type="pathway name" value="Synthesis of GDP-mannose"/>
</dbReference>
<dbReference type="UniPathway" id="UPA00126">
    <property type="reaction ID" value="UER00930"/>
</dbReference>
<dbReference type="PRO" id="PR:Q54K39"/>
<dbReference type="Proteomes" id="UP000002195">
    <property type="component" value="Chromosome 5"/>
</dbReference>
<dbReference type="GO" id="GO:0005737">
    <property type="term" value="C:cytoplasm"/>
    <property type="evidence" value="ECO:0000318"/>
    <property type="project" value="GO_Central"/>
</dbReference>
<dbReference type="GO" id="GO:0005525">
    <property type="term" value="F:GTP binding"/>
    <property type="evidence" value="ECO:0007669"/>
    <property type="project" value="UniProtKB-KW"/>
</dbReference>
<dbReference type="GO" id="GO:0004475">
    <property type="term" value="F:mannose-1-phosphate guanylyltransferase (GTP) activity"/>
    <property type="evidence" value="ECO:0000250"/>
    <property type="project" value="dictyBase"/>
</dbReference>
<dbReference type="GO" id="GO:0046872">
    <property type="term" value="F:metal ion binding"/>
    <property type="evidence" value="ECO:0007669"/>
    <property type="project" value="UniProtKB-KW"/>
</dbReference>
<dbReference type="GO" id="GO:0009298">
    <property type="term" value="P:GDP-mannose biosynthetic process"/>
    <property type="evidence" value="ECO:0000250"/>
    <property type="project" value="UniProtKB"/>
</dbReference>
<dbReference type="GO" id="GO:0006486">
    <property type="term" value="P:protein glycosylation"/>
    <property type="evidence" value="ECO:0000318"/>
    <property type="project" value="GO_Central"/>
</dbReference>
<dbReference type="CDD" id="cd06425">
    <property type="entry name" value="M1P_guanylylT_B_like_N"/>
    <property type="match status" value="1"/>
</dbReference>
<dbReference type="FunFam" id="2.160.10.10:FF:000018">
    <property type="entry name" value="Mannose-1-phosphate guanyltransferase beta"/>
    <property type="match status" value="1"/>
</dbReference>
<dbReference type="FunFam" id="3.90.550.10:FF:000013">
    <property type="entry name" value="mannose-1-phosphate guanyltransferase beta"/>
    <property type="match status" value="1"/>
</dbReference>
<dbReference type="Gene3D" id="2.160.10.10">
    <property type="entry name" value="Hexapeptide repeat proteins"/>
    <property type="match status" value="1"/>
</dbReference>
<dbReference type="Gene3D" id="3.90.550.10">
    <property type="entry name" value="Spore Coat Polysaccharide Biosynthesis Protein SpsA, Chain A"/>
    <property type="match status" value="1"/>
</dbReference>
<dbReference type="InterPro" id="IPR056729">
    <property type="entry name" value="GMPPB_C"/>
</dbReference>
<dbReference type="InterPro" id="IPR045233">
    <property type="entry name" value="GMPPB_N"/>
</dbReference>
<dbReference type="InterPro" id="IPR050486">
    <property type="entry name" value="Mannose-1P_guanyltransferase"/>
</dbReference>
<dbReference type="InterPro" id="IPR005835">
    <property type="entry name" value="NTP_transferase_dom"/>
</dbReference>
<dbReference type="InterPro" id="IPR029044">
    <property type="entry name" value="Nucleotide-diphossugar_trans"/>
</dbReference>
<dbReference type="PANTHER" id="PTHR22572">
    <property type="entry name" value="SUGAR-1-PHOSPHATE GUANYL TRANSFERASE"/>
    <property type="match status" value="1"/>
</dbReference>
<dbReference type="Pfam" id="PF25087">
    <property type="entry name" value="GMPPB_C"/>
    <property type="match status" value="1"/>
</dbReference>
<dbReference type="Pfam" id="PF00483">
    <property type="entry name" value="NTP_transferase"/>
    <property type="match status" value="1"/>
</dbReference>
<dbReference type="SUPFAM" id="SSF53448">
    <property type="entry name" value="Nucleotide-diphospho-sugar transferases"/>
    <property type="match status" value="1"/>
</dbReference>
<proteinExistence type="evidence at transcript level"/>
<protein>
    <recommendedName>
        <fullName evidence="3">Mannose-1-phosphate guanylyltransferase catalytic subunit beta</fullName>
        <ecNumber evidence="1">2.7.7.13</ecNumber>
    </recommendedName>
    <alternativeName>
        <fullName>GDP-mannose pyrophosphorylase B</fullName>
    </alternativeName>
    <alternativeName>
        <fullName>GTP-mannose-1-phosphate guanylyltransferase beta</fullName>
    </alternativeName>
</protein>
<gene>
    <name type="primary">gmppB</name>
    <name type="synonym">mpgA</name>
    <name type="ORF">DDB_G0287619</name>
</gene>